<keyword id="KW-0012">Acyltransferase</keyword>
<keyword id="KW-0963">Cytoplasm</keyword>
<keyword id="KW-0275">Fatty acid biosynthesis</keyword>
<keyword id="KW-0276">Fatty acid metabolism</keyword>
<keyword id="KW-0444">Lipid biosynthesis</keyword>
<keyword id="KW-0443">Lipid metabolism</keyword>
<keyword id="KW-0511">Multifunctional enzyme</keyword>
<keyword id="KW-1185">Reference proteome</keyword>
<keyword id="KW-0808">Transferase</keyword>
<accession>Q9RT23</accession>
<name>FABH1_DEIRA</name>
<reference key="1">
    <citation type="journal article" date="1999" name="Science">
        <title>Genome sequence of the radioresistant bacterium Deinococcus radiodurans R1.</title>
        <authorList>
            <person name="White O."/>
            <person name="Eisen J.A."/>
            <person name="Heidelberg J.F."/>
            <person name="Hickey E.K."/>
            <person name="Peterson J.D."/>
            <person name="Dodson R.J."/>
            <person name="Haft D.H."/>
            <person name="Gwinn M.L."/>
            <person name="Nelson W.C."/>
            <person name="Richardson D.L."/>
            <person name="Moffat K.S."/>
            <person name="Qin H."/>
            <person name="Jiang L."/>
            <person name="Pamphile W."/>
            <person name="Crosby M."/>
            <person name="Shen M."/>
            <person name="Vamathevan J.J."/>
            <person name="Lam P."/>
            <person name="McDonald L.A."/>
            <person name="Utterback T.R."/>
            <person name="Zalewski C."/>
            <person name="Makarova K.S."/>
            <person name="Aravind L."/>
            <person name="Daly M.J."/>
            <person name="Minton K.W."/>
            <person name="Fleischmann R.D."/>
            <person name="Ketchum K.A."/>
            <person name="Nelson K.E."/>
            <person name="Salzberg S.L."/>
            <person name="Smith H.O."/>
            <person name="Venter J.C."/>
            <person name="Fraser C.M."/>
        </authorList>
    </citation>
    <scope>NUCLEOTIDE SEQUENCE [LARGE SCALE GENOMIC DNA]</scope>
    <source>
        <strain>ATCC 13939 / DSM 20539 / JCM 16871 / CCUG 27074 / LMG 4051 / NBRC 15346 / NCIMB 9279 / VKM B-1422 / R1</strain>
    </source>
</reference>
<gene>
    <name evidence="1" type="primary">fabH1</name>
    <name type="ordered locus">DR_1946</name>
</gene>
<protein>
    <recommendedName>
        <fullName evidence="1">Beta-ketoacyl-[acyl-carrier-protein] synthase III 1</fullName>
        <shortName evidence="1">Beta-ketoacyl-ACP synthase III 1</shortName>
        <shortName evidence="1">KAS III 1</shortName>
        <ecNumber evidence="1">2.3.1.180</ecNumber>
    </recommendedName>
    <alternativeName>
        <fullName evidence="1">3-oxoacyl-[acyl-carrier-protein] synthase 3 1</fullName>
    </alternativeName>
    <alternativeName>
        <fullName evidence="1">3-oxoacyl-[acyl-carrier-protein] synthase III 1</fullName>
    </alternativeName>
</protein>
<evidence type="ECO:0000255" key="1">
    <source>
        <dbReference type="HAMAP-Rule" id="MF_01815"/>
    </source>
</evidence>
<comment type="function">
    <text evidence="1">Catalyzes the condensation reaction of fatty acid synthesis by the addition to an acyl acceptor of two carbons from malonyl-ACP. Catalyzes the first condensation reaction which initiates fatty acid synthesis and may therefore play a role in governing the total rate of fatty acid production. Possesses both acetoacetyl-ACP synthase and acetyl transacylase activities. Its substrate specificity determines the biosynthesis of branched-chain and/or straight-chain of fatty acids.</text>
</comment>
<comment type="catalytic activity">
    <reaction evidence="1">
        <text>malonyl-[ACP] + acetyl-CoA + H(+) = 3-oxobutanoyl-[ACP] + CO2 + CoA</text>
        <dbReference type="Rhea" id="RHEA:12080"/>
        <dbReference type="Rhea" id="RHEA-COMP:9623"/>
        <dbReference type="Rhea" id="RHEA-COMP:9625"/>
        <dbReference type="ChEBI" id="CHEBI:15378"/>
        <dbReference type="ChEBI" id="CHEBI:16526"/>
        <dbReference type="ChEBI" id="CHEBI:57287"/>
        <dbReference type="ChEBI" id="CHEBI:57288"/>
        <dbReference type="ChEBI" id="CHEBI:78449"/>
        <dbReference type="ChEBI" id="CHEBI:78450"/>
        <dbReference type="EC" id="2.3.1.180"/>
    </reaction>
</comment>
<comment type="pathway">
    <text evidence="1">Lipid metabolism; fatty acid biosynthesis.</text>
</comment>
<comment type="subunit">
    <text evidence="1">Homodimer.</text>
</comment>
<comment type="subcellular location">
    <subcellularLocation>
        <location evidence="1">Cytoplasm</location>
    </subcellularLocation>
</comment>
<comment type="domain">
    <text evidence="1">The last Arg residue of the ACP-binding site is essential for the weak association between ACP/AcpP and FabH.</text>
</comment>
<comment type="similarity">
    <text evidence="1">Belongs to the thiolase-like superfamily. FabH family.</text>
</comment>
<sequence>MKSIGITAIGMYVPERVVHNHEFESRMGIEDGWIESRSGIRERRFSAPGEFASHIGAKAVQDMLARDPDALKDVDLVIYATCTPDAMFPSTAALVAGQVGLTGVGAYDLSTACSGFVYALSMARGMILGGSAKNVLVLGGEVLSKALDQDDRDTAILFGDGCGCAVVGEVPAGYGFQDFVLGADSAGGPALYISNLADQFPDGQIMRGVPTMNGREVFKFAVRVLGDSGTQALQKSGLSNADVDWLIPHQANIRIIEAATQRFGIPMEKTVINLDRYGNTSAGTVPLALYEAVNDGRIQGGQQLLMVVFGGGLSWAACTMKWWGGRPSLHAQVAQPAEVPA</sequence>
<proteinExistence type="inferred from homology"/>
<dbReference type="EC" id="2.3.1.180" evidence="1"/>
<dbReference type="EMBL" id="AE000513">
    <property type="protein sequence ID" value="AAF11498.1"/>
    <property type="molecule type" value="Genomic_DNA"/>
</dbReference>
<dbReference type="PIR" id="B75334">
    <property type="entry name" value="B75334"/>
</dbReference>
<dbReference type="RefSeq" id="NP_295669.1">
    <property type="nucleotide sequence ID" value="NC_001263.1"/>
</dbReference>
<dbReference type="RefSeq" id="WP_010888579.1">
    <property type="nucleotide sequence ID" value="NC_001263.1"/>
</dbReference>
<dbReference type="SMR" id="Q9RT23"/>
<dbReference type="FunCoup" id="Q9RT23">
    <property type="interactions" value="407"/>
</dbReference>
<dbReference type="STRING" id="243230.DR_1946"/>
<dbReference type="PaxDb" id="243230-DR_1946"/>
<dbReference type="EnsemblBacteria" id="AAF11498">
    <property type="protein sequence ID" value="AAF11498"/>
    <property type="gene ID" value="DR_1946"/>
</dbReference>
<dbReference type="GeneID" id="69518182"/>
<dbReference type="KEGG" id="dra:DR_1946"/>
<dbReference type="PATRIC" id="fig|243230.17.peg.2166"/>
<dbReference type="eggNOG" id="COG0332">
    <property type="taxonomic scope" value="Bacteria"/>
</dbReference>
<dbReference type="HOGENOM" id="CLU_039592_3_1_0"/>
<dbReference type="InParanoid" id="Q9RT23"/>
<dbReference type="OrthoDB" id="9815506at2"/>
<dbReference type="UniPathway" id="UPA00094"/>
<dbReference type="Proteomes" id="UP000002524">
    <property type="component" value="Chromosome 1"/>
</dbReference>
<dbReference type="GO" id="GO:0005737">
    <property type="term" value="C:cytoplasm"/>
    <property type="evidence" value="ECO:0007669"/>
    <property type="project" value="UniProtKB-SubCell"/>
</dbReference>
<dbReference type="GO" id="GO:0004315">
    <property type="term" value="F:3-oxoacyl-[acyl-carrier-protein] synthase activity"/>
    <property type="evidence" value="ECO:0007669"/>
    <property type="project" value="InterPro"/>
</dbReference>
<dbReference type="GO" id="GO:0033818">
    <property type="term" value="F:beta-ketoacyl-acyl-carrier-protein synthase III activity"/>
    <property type="evidence" value="ECO:0007669"/>
    <property type="project" value="UniProtKB-UniRule"/>
</dbReference>
<dbReference type="GO" id="GO:0006633">
    <property type="term" value="P:fatty acid biosynthetic process"/>
    <property type="evidence" value="ECO:0007669"/>
    <property type="project" value="UniProtKB-UniRule"/>
</dbReference>
<dbReference type="GO" id="GO:0044550">
    <property type="term" value="P:secondary metabolite biosynthetic process"/>
    <property type="evidence" value="ECO:0000318"/>
    <property type="project" value="GO_Central"/>
</dbReference>
<dbReference type="CDD" id="cd00830">
    <property type="entry name" value="KAS_III"/>
    <property type="match status" value="1"/>
</dbReference>
<dbReference type="FunFam" id="3.40.47.10:FF:000004">
    <property type="entry name" value="3-oxoacyl-[acyl-carrier-protein] synthase 3"/>
    <property type="match status" value="1"/>
</dbReference>
<dbReference type="Gene3D" id="3.40.47.10">
    <property type="match status" value="1"/>
</dbReference>
<dbReference type="HAMAP" id="MF_01815">
    <property type="entry name" value="FabH"/>
    <property type="match status" value="1"/>
</dbReference>
<dbReference type="InterPro" id="IPR013747">
    <property type="entry name" value="ACP_syn_III_C"/>
</dbReference>
<dbReference type="InterPro" id="IPR013751">
    <property type="entry name" value="ACP_syn_III_N"/>
</dbReference>
<dbReference type="InterPro" id="IPR004655">
    <property type="entry name" value="FabH"/>
</dbReference>
<dbReference type="InterPro" id="IPR016039">
    <property type="entry name" value="Thiolase-like"/>
</dbReference>
<dbReference type="NCBIfam" id="TIGR00747">
    <property type="entry name" value="fabH"/>
    <property type="match status" value="1"/>
</dbReference>
<dbReference type="NCBIfam" id="NF006829">
    <property type="entry name" value="PRK09352.1"/>
    <property type="match status" value="1"/>
</dbReference>
<dbReference type="PANTHER" id="PTHR34069">
    <property type="entry name" value="3-OXOACYL-[ACYL-CARRIER-PROTEIN] SYNTHASE 3"/>
    <property type="match status" value="1"/>
</dbReference>
<dbReference type="PANTHER" id="PTHR34069:SF2">
    <property type="entry name" value="BETA-KETOACYL-[ACYL-CARRIER-PROTEIN] SYNTHASE III"/>
    <property type="match status" value="1"/>
</dbReference>
<dbReference type="Pfam" id="PF08545">
    <property type="entry name" value="ACP_syn_III"/>
    <property type="match status" value="1"/>
</dbReference>
<dbReference type="Pfam" id="PF08541">
    <property type="entry name" value="ACP_syn_III_C"/>
    <property type="match status" value="1"/>
</dbReference>
<dbReference type="SUPFAM" id="SSF53901">
    <property type="entry name" value="Thiolase-like"/>
    <property type="match status" value="1"/>
</dbReference>
<feature type="chain" id="PRO_0000110422" description="Beta-ketoacyl-[acyl-carrier-protein] synthase III 1">
    <location>
        <begin position="1"/>
        <end position="341"/>
    </location>
</feature>
<feature type="region of interest" description="ACP-binding" evidence="1">
    <location>
        <begin position="250"/>
        <end position="254"/>
    </location>
</feature>
<feature type="active site" evidence="1">
    <location>
        <position position="113"/>
    </location>
</feature>
<feature type="active site" evidence="1">
    <location>
        <position position="249"/>
    </location>
</feature>
<feature type="active site" evidence="1">
    <location>
        <position position="279"/>
    </location>
</feature>
<organism>
    <name type="scientific">Deinococcus radiodurans (strain ATCC 13939 / DSM 20539 / JCM 16871 / CCUG 27074 / LMG 4051 / NBRC 15346 / NCIMB 9279 / VKM B-1422 / R1)</name>
    <dbReference type="NCBI Taxonomy" id="243230"/>
    <lineage>
        <taxon>Bacteria</taxon>
        <taxon>Thermotogati</taxon>
        <taxon>Deinococcota</taxon>
        <taxon>Deinococci</taxon>
        <taxon>Deinococcales</taxon>
        <taxon>Deinococcaceae</taxon>
        <taxon>Deinococcus</taxon>
    </lineage>
</organism>